<evidence type="ECO:0000255" key="1"/>
<evidence type="ECO:0000305" key="2"/>
<proteinExistence type="inferred from homology"/>
<organism>
    <name type="scientific">Varicella-zoster virus (strain Dumas)</name>
    <name type="common">HHV-3</name>
    <name type="synonym">Human herpesvirus 3</name>
    <dbReference type="NCBI Taxonomy" id="10338"/>
    <lineage>
        <taxon>Viruses</taxon>
        <taxon>Duplodnaviria</taxon>
        <taxon>Heunggongvirae</taxon>
        <taxon>Peploviricota</taxon>
        <taxon>Herviviricetes</taxon>
        <taxon>Herpesvirales</taxon>
        <taxon>Orthoherpesviridae</taxon>
        <taxon>Alphaherpesvirinae</taxon>
        <taxon>Varicellovirus</taxon>
        <taxon>Varicellovirus humanalpha3</taxon>
        <taxon>Human herpesvirus 3</taxon>
    </lineage>
</organism>
<protein>
    <recommendedName>
        <fullName>Membrane protein UL43 homolog</fullName>
    </recommendedName>
    <alternativeName>
        <fullName>Membrane protein ORF15</fullName>
    </alternativeName>
</protein>
<reference key="1">
    <citation type="journal article" date="1986" name="J. Gen. Virol.">
        <title>The complete DNA sequence of varicella-zoster virus.</title>
        <authorList>
            <person name="Davison A.J."/>
            <person name="Scott J.E."/>
        </authorList>
    </citation>
    <scope>NUCLEOTIDE SEQUENCE [LARGE SCALE GENOMIC DNA]</scope>
</reference>
<organismHost>
    <name type="scientific">Homo sapiens</name>
    <name type="common">Human</name>
    <dbReference type="NCBI Taxonomy" id="9606"/>
</organismHost>
<accession>P09273</accession>
<name>MB43_VZVD</name>
<sequence>MAVNGERAVHDENLGVLDRELIRAQSIQGCVGNPQECNSCAITSASRLFLVGLQASVITSGLILQYHVCEAAVNATIMGLIVVSGLWPTSVKFLRTLAKLGRCLQTVVVLGFAVLWAVGCPISRDLPFVELLGISISAITGTVAAVHIHYYNFVTTFNGPHIYFYVMMLGTGLGGLLTVILYMYVSKYEVLIGLCISIVTLVSIVDAATDLQDTCIYRKNRHKQLNTYTDLGFAVVYTQNDRGRVCDHRESSRTLKRVFKGIRIMSVIPPVLYIVTPLMWAISHIIKLNHFIKLTQVTLAVSIGGHIIAFGLQGFAVLYQEKKNLWVIVLYTTTSVTGIAVTFAGISWGAIIILTSTVAAGLTCIQMMRLSVKPIDCFMASHITKVYHVCVYIIINLCYLCGTYVS</sequence>
<keyword id="KW-0472">Membrane</keyword>
<keyword id="KW-1185">Reference proteome</keyword>
<keyword id="KW-0812">Transmembrane</keyword>
<keyword id="KW-1133">Transmembrane helix</keyword>
<gene>
    <name type="ORF">ORF15</name>
</gene>
<comment type="subcellular location">
    <subcellularLocation>
        <location evidence="2">Membrane</location>
        <topology evidence="2">Multi-pass membrane protein</topology>
    </subcellularLocation>
</comment>
<comment type="similarity">
    <text evidence="2">Belongs to the alphaherpesvirinae HHV-1 UL43 family.</text>
</comment>
<feature type="chain" id="PRO_0000116085" description="Membrane protein UL43 homolog">
    <location>
        <begin position="1"/>
        <end position="406"/>
    </location>
</feature>
<feature type="transmembrane region" description="Helical" evidence="1">
    <location>
        <begin position="48"/>
        <end position="68"/>
    </location>
</feature>
<feature type="transmembrane region" description="Helical" evidence="1">
    <location>
        <begin position="71"/>
        <end position="91"/>
    </location>
</feature>
<feature type="transmembrane region" description="Helical" evidence="1">
    <location>
        <begin position="103"/>
        <end position="123"/>
    </location>
</feature>
<feature type="transmembrane region" description="Helical" evidence="1">
    <location>
        <begin position="126"/>
        <end position="146"/>
    </location>
</feature>
<feature type="transmembrane region" description="Helical" evidence="1">
    <location>
        <begin position="162"/>
        <end position="182"/>
    </location>
</feature>
<feature type="transmembrane region" description="Helical" evidence="1">
    <location>
        <begin position="188"/>
        <end position="208"/>
    </location>
</feature>
<feature type="transmembrane region" description="Helical" evidence="1">
    <location>
        <begin position="266"/>
        <end position="286"/>
    </location>
</feature>
<feature type="transmembrane region" description="Helical" evidence="1">
    <location>
        <begin position="299"/>
        <end position="319"/>
    </location>
</feature>
<feature type="transmembrane region" description="Helical" evidence="1">
    <location>
        <begin position="339"/>
        <end position="359"/>
    </location>
</feature>
<feature type="transmembrane region" description="Helical" evidence="1">
    <location>
        <begin position="386"/>
        <end position="406"/>
    </location>
</feature>
<dbReference type="EMBL" id="X04370">
    <property type="protein sequence ID" value="CAA27898.1"/>
    <property type="molecule type" value="Genomic_DNA"/>
</dbReference>
<dbReference type="PIR" id="F27342">
    <property type="entry name" value="WZBE15"/>
</dbReference>
<dbReference type="Proteomes" id="UP000002602">
    <property type="component" value="Genome"/>
</dbReference>
<dbReference type="GO" id="GO:0016020">
    <property type="term" value="C:membrane"/>
    <property type="evidence" value="ECO:0007669"/>
    <property type="project" value="UniProtKB-SubCell"/>
</dbReference>
<dbReference type="GO" id="GO:0019033">
    <property type="term" value="C:viral tegument"/>
    <property type="evidence" value="ECO:0007669"/>
    <property type="project" value="InterPro"/>
</dbReference>
<dbReference type="InterPro" id="IPR007764">
    <property type="entry name" value="Herpes_UL43"/>
</dbReference>
<dbReference type="Pfam" id="PF05072">
    <property type="entry name" value="Herpes_UL43"/>
    <property type="match status" value="1"/>
</dbReference>